<feature type="chain" id="PRO_0000414512" description="Release factor glutamine methyltransferase">
    <location>
        <begin position="1"/>
        <end position="285"/>
    </location>
</feature>
<feature type="binding site" evidence="1">
    <location>
        <position position="143"/>
    </location>
    <ligand>
        <name>S-adenosyl-L-methionine</name>
        <dbReference type="ChEBI" id="CHEBI:59789"/>
    </ligand>
</feature>
<feature type="binding site" evidence="1">
    <location>
        <begin position="189"/>
        <end position="192"/>
    </location>
    <ligand>
        <name>substrate</name>
    </ligand>
</feature>
<feature type="binding site" evidence="1">
    <location>
        <position position="189"/>
    </location>
    <ligand>
        <name>S-adenosyl-L-methionine</name>
        <dbReference type="ChEBI" id="CHEBI:59789"/>
    </ligand>
</feature>
<comment type="function">
    <text evidence="1">Methylates the class 1 translation termination release factors RF1/PrfA and RF2/PrfB on the glutamine residue of the universally conserved GGQ motif.</text>
</comment>
<comment type="catalytic activity">
    <reaction evidence="1">
        <text>L-glutaminyl-[peptide chain release factor] + S-adenosyl-L-methionine = N(5)-methyl-L-glutaminyl-[peptide chain release factor] + S-adenosyl-L-homocysteine + H(+)</text>
        <dbReference type="Rhea" id="RHEA:42896"/>
        <dbReference type="Rhea" id="RHEA-COMP:10271"/>
        <dbReference type="Rhea" id="RHEA-COMP:10272"/>
        <dbReference type="ChEBI" id="CHEBI:15378"/>
        <dbReference type="ChEBI" id="CHEBI:30011"/>
        <dbReference type="ChEBI" id="CHEBI:57856"/>
        <dbReference type="ChEBI" id="CHEBI:59789"/>
        <dbReference type="ChEBI" id="CHEBI:61891"/>
        <dbReference type="EC" id="2.1.1.297"/>
    </reaction>
</comment>
<comment type="similarity">
    <text evidence="1">Belongs to the protein N5-glutamine methyltransferase family. PrmC subfamily.</text>
</comment>
<accession>Q97F67</accession>
<dbReference type="EC" id="2.1.1.297" evidence="1"/>
<dbReference type="EMBL" id="AE001437">
    <property type="protein sequence ID" value="AAK80828.1"/>
    <property type="molecule type" value="Genomic_DNA"/>
</dbReference>
<dbReference type="PIR" id="A97255">
    <property type="entry name" value="A97255"/>
</dbReference>
<dbReference type="RefSeq" id="NP_349488.1">
    <property type="nucleotide sequence ID" value="NC_003030.1"/>
</dbReference>
<dbReference type="RefSeq" id="WP_010966169.1">
    <property type="nucleotide sequence ID" value="NC_003030.1"/>
</dbReference>
<dbReference type="SMR" id="Q97F67"/>
<dbReference type="STRING" id="272562.CA_C2885"/>
<dbReference type="GeneID" id="44999373"/>
<dbReference type="KEGG" id="cac:CA_C2885"/>
<dbReference type="PATRIC" id="fig|272562.8.peg.3069"/>
<dbReference type="eggNOG" id="COG2890">
    <property type="taxonomic scope" value="Bacteria"/>
</dbReference>
<dbReference type="HOGENOM" id="CLU_018398_3_2_9"/>
<dbReference type="OrthoDB" id="9800643at2"/>
<dbReference type="Proteomes" id="UP000000814">
    <property type="component" value="Chromosome"/>
</dbReference>
<dbReference type="GO" id="GO:0003676">
    <property type="term" value="F:nucleic acid binding"/>
    <property type="evidence" value="ECO:0007669"/>
    <property type="project" value="InterPro"/>
</dbReference>
<dbReference type="GO" id="GO:0102559">
    <property type="term" value="F:protein-(glutamine-N5) methyltransferase activity"/>
    <property type="evidence" value="ECO:0007669"/>
    <property type="project" value="UniProtKB-EC"/>
</dbReference>
<dbReference type="GO" id="GO:0036009">
    <property type="term" value="F:protein-glutamine N-methyltransferase activity"/>
    <property type="evidence" value="ECO:0007669"/>
    <property type="project" value="UniProtKB-UniRule"/>
</dbReference>
<dbReference type="GO" id="GO:0032259">
    <property type="term" value="P:methylation"/>
    <property type="evidence" value="ECO:0007669"/>
    <property type="project" value="UniProtKB-KW"/>
</dbReference>
<dbReference type="CDD" id="cd02440">
    <property type="entry name" value="AdoMet_MTases"/>
    <property type="match status" value="1"/>
</dbReference>
<dbReference type="Gene3D" id="1.10.8.10">
    <property type="entry name" value="DNA helicase RuvA subunit, C-terminal domain"/>
    <property type="match status" value="1"/>
</dbReference>
<dbReference type="Gene3D" id="3.40.50.150">
    <property type="entry name" value="Vaccinia Virus protein VP39"/>
    <property type="match status" value="1"/>
</dbReference>
<dbReference type="HAMAP" id="MF_02126">
    <property type="entry name" value="RF_methyltr_PrmC"/>
    <property type="match status" value="1"/>
</dbReference>
<dbReference type="InterPro" id="IPR002052">
    <property type="entry name" value="DNA_methylase_N6_adenine_CS"/>
</dbReference>
<dbReference type="InterPro" id="IPR004556">
    <property type="entry name" value="HemK-like"/>
</dbReference>
<dbReference type="InterPro" id="IPR050320">
    <property type="entry name" value="N5-glutamine_MTase"/>
</dbReference>
<dbReference type="InterPro" id="IPR040758">
    <property type="entry name" value="PrmC_N"/>
</dbReference>
<dbReference type="InterPro" id="IPR019874">
    <property type="entry name" value="RF_methyltr_PrmC"/>
</dbReference>
<dbReference type="InterPro" id="IPR029063">
    <property type="entry name" value="SAM-dependent_MTases_sf"/>
</dbReference>
<dbReference type="InterPro" id="IPR007848">
    <property type="entry name" value="Small_mtfrase_dom"/>
</dbReference>
<dbReference type="NCBIfam" id="TIGR00536">
    <property type="entry name" value="hemK_fam"/>
    <property type="match status" value="1"/>
</dbReference>
<dbReference type="NCBIfam" id="TIGR03534">
    <property type="entry name" value="RF_mod_PrmC"/>
    <property type="match status" value="1"/>
</dbReference>
<dbReference type="PANTHER" id="PTHR18895">
    <property type="entry name" value="HEMK METHYLTRANSFERASE"/>
    <property type="match status" value="1"/>
</dbReference>
<dbReference type="PANTHER" id="PTHR18895:SF74">
    <property type="entry name" value="MTRF1L RELEASE FACTOR GLUTAMINE METHYLTRANSFERASE"/>
    <property type="match status" value="1"/>
</dbReference>
<dbReference type="Pfam" id="PF05175">
    <property type="entry name" value="MTS"/>
    <property type="match status" value="1"/>
</dbReference>
<dbReference type="Pfam" id="PF17827">
    <property type="entry name" value="PrmC_N"/>
    <property type="match status" value="1"/>
</dbReference>
<dbReference type="SUPFAM" id="SSF53335">
    <property type="entry name" value="S-adenosyl-L-methionine-dependent methyltransferases"/>
    <property type="match status" value="1"/>
</dbReference>
<organism>
    <name type="scientific">Clostridium acetobutylicum (strain ATCC 824 / DSM 792 / JCM 1419 / IAM 19013 / LMG 5710 / NBRC 13948 / NRRL B-527 / VKM B-1787 / 2291 / W)</name>
    <dbReference type="NCBI Taxonomy" id="272562"/>
    <lineage>
        <taxon>Bacteria</taxon>
        <taxon>Bacillati</taxon>
        <taxon>Bacillota</taxon>
        <taxon>Clostridia</taxon>
        <taxon>Eubacteriales</taxon>
        <taxon>Clostridiaceae</taxon>
        <taxon>Clostridium</taxon>
    </lineage>
</organism>
<name>PRMC_CLOAB</name>
<keyword id="KW-0489">Methyltransferase</keyword>
<keyword id="KW-1185">Reference proteome</keyword>
<keyword id="KW-0949">S-adenosyl-L-methionine</keyword>
<keyword id="KW-0808">Transferase</keyword>
<gene>
    <name evidence="1" type="primary">prmC</name>
    <name type="ordered locus">CA_C2885</name>
</gene>
<evidence type="ECO:0000255" key="1">
    <source>
        <dbReference type="HAMAP-Rule" id="MF_02126"/>
    </source>
</evidence>
<proteinExistence type="inferred from homology"/>
<sequence>MKIKDALIKAYSVLKETNDEFYMEDSQILLSYVLKKDRIFLITNREYEIEENSLKQYFDYINMRKKKMPIRYITEKCEFMGLDFHVEKGVLIPRPDTEILVEAVLEYIELNNYKKVCDVCTGSGAIGLSIAKYAKDVEVLCSDISPDAIRVSKINRQGLNLEDRVKIENGDLLEKPIERGEKFDIVVSNPPYIREDEIPKLMDDVKDYEPIIALVGGEDGLDFYRRITSMSKKVLKPGGLIAYEIGSDEANEVSNILENEGFVSIETRKDFARMDRVVLAVRGGL</sequence>
<reference key="1">
    <citation type="journal article" date="2001" name="J. Bacteriol.">
        <title>Genome sequence and comparative analysis of the solvent-producing bacterium Clostridium acetobutylicum.</title>
        <authorList>
            <person name="Noelling J."/>
            <person name="Breton G."/>
            <person name="Omelchenko M.V."/>
            <person name="Makarova K.S."/>
            <person name="Zeng Q."/>
            <person name="Gibson R."/>
            <person name="Lee H.M."/>
            <person name="Dubois J."/>
            <person name="Qiu D."/>
            <person name="Hitti J."/>
            <person name="Wolf Y.I."/>
            <person name="Tatusov R.L."/>
            <person name="Sabathe F."/>
            <person name="Doucette-Stamm L.A."/>
            <person name="Soucaille P."/>
            <person name="Daly M.J."/>
            <person name="Bennett G.N."/>
            <person name="Koonin E.V."/>
            <person name="Smith D.R."/>
        </authorList>
    </citation>
    <scope>NUCLEOTIDE SEQUENCE [LARGE SCALE GENOMIC DNA]</scope>
    <source>
        <strain>ATCC 824 / DSM 792 / JCM 1419 / IAM 19013 / LMG 5710 / NBRC 13948 / NRRL B-527 / VKM B-1787 / 2291 / W</strain>
    </source>
</reference>
<protein>
    <recommendedName>
        <fullName evidence="1">Release factor glutamine methyltransferase</fullName>
        <shortName evidence="1">RF MTase</shortName>
        <ecNumber evidence="1">2.1.1.297</ecNumber>
    </recommendedName>
    <alternativeName>
        <fullName evidence="1">N5-glutamine methyltransferase PrmC</fullName>
    </alternativeName>
    <alternativeName>
        <fullName evidence="1">Protein-(glutamine-N5) MTase PrmC</fullName>
    </alternativeName>
    <alternativeName>
        <fullName evidence="1">Protein-glutamine N-methyltransferase PrmC</fullName>
    </alternativeName>
</protein>